<feature type="chain" id="PRO_1000202072" description="Phospho-N-acetylmuramoyl-pentapeptide-transferase">
    <location>
        <begin position="1"/>
        <end position="324"/>
    </location>
</feature>
<feature type="transmembrane region" description="Helical" evidence="1">
    <location>
        <begin position="9"/>
        <end position="29"/>
    </location>
</feature>
<feature type="transmembrane region" description="Helical" evidence="1">
    <location>
        <begin position="53"/>
        <end position="73"/>
    </location>
</feature>
<feature type="transmembrane region" description="Helical" evidence="1">
    <location>
        <begin position="77"/>
        <end position="97"/>
    </location>
</feature>
<feature type="transmembrane region" description="Helical" evidence="1">
    <location>
        <begin position="117"/>
        <end position="137"/>
    </location>
</feature>
<feature type="transmembrane region" description="Helical" evidence="1">
    <location>
        <begin position="147"/>
        <end position="167"/>
    </location>
</feature>
<feature type="transmembrane region" description="Helical" evidence="1">
    <location>
        <begin position="176"/>
        <end position="196"/>
    </location>
</feature>
<feature type="transmembrane region" description="Helical" evidence="1">
    <location>
        <begin position="201"/>
        <end position="221"/>
    </location>
</feature>
<feature type="transmembrane region" description="Helical" evidence="1">
    <location>
        <begin position="227"/>
        <end position="247"/>
    </location>
</feature>
<feature type="transmembrane region" description="Helical" evidence="1">
    <location>
        <begin position="253"/>
        <end position="273"/>
    </location>
</feature>
<feature type="transmembrane region" description="Helical" evidence="1">
    <location>
        <begin position="304"/>
        <end position="324"/>
    </location>
</feature>
<evidence type="ECO:0000255" key="1">
    <source>
        <dbReference type="HAMAP-Rule" id="MF_00038"/>
    </source>
</evidence>
<keyword id="KW-0131">Cell cycle</keyword>
<keyword id="KW-0132">Cell division</keyword>
<keyword id="KW-1003">Cell membrane</keyword>
<keyword id="KW-0133">Cell shape</keyword>
<keyword id="KW-0961">Cell wall biogenesis/degradation</keyword>
<keyword id="KW-0460">Magnesium</keyword>
<keyword id="KW-0472">Membrane</keyword>
<keyword id="KW-0479">Metal-binding</keyword>
<keyword id="KW-0573">Peptidoglycan synthesis</keyword>
<keyword id="KW-0808">Transferase</keyword>
<keyword id="KW-0812">Transmembrane</keyword>
<keyword id="KW-1133">Transmembrane helix</keyword>
<comment type="function">
    <text evidence="1">Catalyzes the initial step of the lipid cycle reactions in the biosynthesis of the cell wall peptidoglycan: transfers peptidoglycan precursor phospho-MurNAc-pentapeptide from UDP-MurNAc-pentapeptide onto the lipid carrier undecaprenyl phosphate, yielding undecaprenyl-pyrophosphoryl-MurNAc-pentapeptide, known as lipid I.</text>
</comment>
<comment type="catalytic activity">
    <reaction evidence="1">
        <text>UDP-N-acetyl-alpha-D-muramoyl-L-alanyl-gamma-D-glutamyl-meso-2,6-diaminopimeloyl-D-alanyl-D-alanine + di-trans,octa-cis-undecaprenyl phosphate = di-trans,octa-cis-undecaprenyl diphospho-N-acetyl-alpha-D-muramoyl-L-alanyl-D-glutamyl-meso-2,6-diaminopimeloyl-D-alanyl-D-alanine + UMP</text>
        <dbReference type="Rhea" id="RHEA:28386"/>
        <dbReference type="ChEBI" id="CHEBI:57865"/>
        <dbReference type="ChEBI" id="CHEBI:60392"/>
        <dbReference type="ChEBI" id="CHEBI:61386"/>
        <dbReference type="ChEBI" id="CHEBI:61387"/>
        <dbReference type="EC" id="2.7.8.13"/>
    </reaction>
</comment>
<comment type="cofactor">
    <cofactor evidence="1">
        <name>Mg(2+)</name>
        <dbReference type="ChEBI" id="CHEBI:18420"/>
    </cofactor>
</comment>
<comment type="pathway">
    <text evidence="1">Cell wall biogenesis; peptidoglycan biosynthesis.</text>
</comment>
<comment type="subcellular location">
    <subcellularLocation>
        <location evidence="1">Cell membrane</location>
        <topology evidence="1">Multi-pass membrane protein</topology>
    </subcellularLocation>
</comment>
<comment type="similarity">
    <text evidence="1">Belongs to the glycosyltransferase 4 family. MraY subfamily.</text>
</comment>
<accession>C1KWZ0</accession>
<protein>
    <recommendedName>
        <fullName evidence="1">Phospho-N-acetylmuramoyl-pentapeptide-transferase</fullName>
        <ecNumber evidence="1">2.7.8.13</ecNumber>
    </recommendedName>
    <alternativeName>
        <fullName evidence="1">UDP-MurNAc-pentapeptide phosphotransferase</fullName>
    </alternativeName>
</protein>
<name>MRAY_LISMC</name>
<sequence length="324" mass="35676">MSLYMLVSTFAVAFIITVIGVPLFIPFLVKLKFGQSIRDEGPKMHEKKSGTPTMGAVVFITAMLISFLIFSFISGEVSAATWLLFIALALFGALGFLDDYIKVVQKRNLGLTSKQKFLGQVAISILFYLVYHLNGFAETLNIPFTNIEVDLGWFFVIFILFWLVGFSNAVNLTDGLDGLVSGLSVIAFSAFGVIAFYQEQMDVAIFCFAIVGGMLGFLLFNKNPAKIFMGDTGSLALGGSIAAISILVHQEWLLLLIGIIFVIETASVILQVFYFKATGGKRIFRMTPIHHHFELGGWSEWRVVLTFWGIGLIGAIISVCVVIF</sequence>
<gene>
    <name evidence="1" type="primary">mraY</name>
    <name type="ordered locus">Lm4b_02058</name>
</gene>
<reference key="1">
    <citation type="journal article" date="2012" name="BMC Genomics">
        <title>Comparative genomics and transcriptomics of lineages I, II, and III strains of Listeria monocytogenes.</title>
        <authorList>
            <person name="Hain T."/>
            <person name="Ghai R."/>
            <person name="Billion A."/>
            <person name="Kuenne C.T."/>
            <person name="Steinweg C."/>
            <person name="Izar B."/>
            <person name="Mohamed W."/>
            <person name="Mraheil M."/>
            <person name="Domann E."/>
            <person name="Schaffrath S."/>
            <person name="Karst U."/>
            <person name="Goesmann A."/>
            <person name="Oehm S."/>
            <person name="Puhler A."/>
            <person name="Merkl R."/>
            <person name="Vorwerk S."/>
            <person name="Glaser P."/>
            <person name="Garrido P."/>
            <person name="Rusniok C."/>
            <person name="Buchrieser C."/>
            <person name="Goebel W."/>
            <person name="Chakraborty T."/>
        </authorList>
    </citation>
    <scope>NUCLEOTIDE SEQUENCE [LARGE SCALE GENOMIC DNA]</scope>
    <source>
        <strain>CLIP80459</strain>
    </source>
</reference>
<organism>
    <name type="scientific">Listeria monocytogenes serotype 4b (strain CLIP80459)</name>
    <dbReference type="NCBI Taxonomy" id="568819"/>
    <lineage>
        <taxon>Bacteria</taxon>
        <taxon>Bacillati</taxon>
        <taxon>Bacillota</taxon>
        <taxon>Bacilli</taxon>
        <taxon>Bacillales</taxon>
        <taxon>Listeriaceae</taxon>
        <taxon>Listeria</taxon>
    </lineage>
</organism>
<proteinExistence type="inferred from homology"/>
<dbReference type="EC" id="2.7.8.13" evidence="1"/>
<dbReference type="EMBL" id="FM242711">
    <property type="protein sequence ID" value="CAS05817.1"/>
    <property type="molecule type" value="Genomic_DNA"/>
</dbReference>
<dbReference type="RefSeq" id="WP_003728332.1">
    <property type="nucleotide sequence ID" value="NC_012488.1"/>
</dbReference>
<dbReference type="SMR" id="C1KWZ0"/>
<dbReference type="KEGG" id="lmc:Lm4b_02058"/>
<dbReference type="HOGENOM" id="CLU_023982_0_1_9"/>
<dbReference type="UniPathway" id="UPA00219"/>
<dbReference type="GO" id="GO:0005886">
    <property type="term" value="C:plasma membrane"/>
    <property type="evidence" value="ECO:0007669"/>
    <property type="project" value="UniProtKB-SubCell"/>
</dbReference>
<dbReference type="GO" id="GO:0046872">
    <property type="term" value="F:metal ion binding"/>
    <property type="evidence" value="ECO:0007669"/>
    <property type="project" value="UniProtKB-KW"/>
</dbReference>
<dbReference type="GO" id="GO:0008963">
    <property type="term" value="F:phospho-N-acetylmuramoyl-pentapeptide-transferase activity"/>
    <property type="evidence" value="ECO:0007669"/>
    <property type="project" value="UniProtKB-UniRule"/>
</dbReference>
<dbReference type="GO" id="GO:0051992">
    <property type="term" value="F:UDP-N-acetylmuramoyl-L-alanyl-D-glutamyl-meso-2,6-diaminopimelyl-D-alanyl-D-alanine:undecaprenyl-phosphate transferase activity"/>
    <property type="evidence" value="ECO:0007669"/>
    <property type="project" value="RHEA"/>
</dbReference>
<dbReference type="GO" id="GO:0051301">
    <property type="term" value="P:cell division"/>
    <property type="evidence" value="ECO:0007669"/>
    <property type="project" value="UniProtKB-KW"/>
</dbReference>
<dbReference type="GO" id="GO:0071555">
    <property type="term" value="P:cell wall organization"/>
    <property type="evidence" value="ECO:0007669"/>
    <property type="project" value="UniProtKB-KW"/>
</dbReference>
<dbReference type="GO" id="GO:0009252">
    <property type="term" value="P:peptidoglycan biosynthetic process"/>
    <property type="evidence" value="ECO:0007669"/>
    <property type="project" value="UniProtKB-UniRule"/>
</dbReference>
<dbReference type="GO" id="GO:0008360">
    <property type="term" value="P:regulation of cell shape"/>
    <property type="evidence" value="ECO:0007669"/>
    <property type="project" value="UniProtKB-KW"/>
</dbReference>
<dbReference type="CDD" id="cd06852">
    <property type="entry name" value="GT_MraY"/>
    <property type="match status" value="1"/>
</dbReference>
<dbReference type="HAMAP" id="MF_00038">
    <property type="entry name" value="MraY"/>
    <property type="match status" value="1"/>
</dbReference>
<dbReference type="InterPro" id="IPR000715">
    <property type="entry name" value="Glycosyl_transferase_4"/>
</dbReference>
<dbReference type="InterPro" id="IPR003524">
    <property type="entry name" value="PNAcMuramoyl-5peptid_Trfase"/>
</dbReference>
<dbReference type="InterPro" id="IPR018480">
    <property type="entry name" value="PNAcMuramoyl-5peptid_Trfase_CS"/>
</dbReference>
<dbReference type="NCBIfam" id="TIGR00445">
    <property type="entry name" value="mraY"/>
    <property type="match status" value="1"/>
</dbReference>
<dbReference type="PANTHER" id="PTHR22926">
    <property type="entry name" value="PHOSPHO-N-ACETYLMURAMOYL-PENTAPEPTIDE-TRANSFERASE"/>
    <property type="match status" value="1"/>
</dbReference>
<dbReference type="PANTHER" id="PTHR22926:SF5">
    <property type="entry name" value="PHOSPHO-N-ACETYLMURAMOYL-PENTAPEPTIDE-TRANSFERASE HOMOLOG"/>
    <property type="match status" value="1"/>
</dbReference>
<dbReference type="Pfam" id="PF00953">
    <property type="entry name" value="Glycos_transf_4"/>
    <property type="match status" value="1"/>
</dbReference>
<dbReference type="PROSITE" id="PS01348">
    <property type="entry name" value="MRAY_2"/>
    <property type="match status" value="1"/>
</dbReference>